<protein>
    <recommendedName>
        <fullName>Putative ankyrin repeat protein L675</fullName>
    </recommendedName>
</protein>
<proteinExistence type="predicted"/>
<feature type="chain" id="PRO_0000067185" description="Putative ankyrin repeat protein L675">
    <location>
        <begin position="1"/>
        <end position="472"/>
    </location>
</feature>
<feature type="repeat" description="ANK 1">
    <location>
        <begin position="125"/>
        <end position="156"/>
    </location>
</feature>
<feature type="repeat" description="ANK 2">
    <location>
        <begin position="187"/>
        <end position="216"/>
    </location>
</feature>
<feature type="repeat" description="ANK 3">
    <location>
        <begin position="265"/>
        <end position="295"/>
    </location>
</feature>
<feature type="repeat" description="ANK 4">
    <location>
        <begin position="297"/>
        <end position="323"/>
    </location>
</feature>
<feature type="repeat" description="ANK 5">
    <location>
        <begin position="325"/>
        <end position="351"/>
    </location>
</feature>
<feature type="repeat" description="ANK 6">
    <location>
        <begin position="352"/>
        <end position="381"/>
    </location>
</feature>
<feature type="repeat" description="ANK 7">
    <location>
        <begin position="382"/>
        <end position="411"/>
    </location>
</feature>
<feature type="repeat" description="ANK 8">
    <location>
        <begin position="413"/>
        <end position="440"/>
    </location>
</feature>
<organismHost>
    <name type="scientific">Acanthamoeba polyphaga</name>
    <name type="common">Amoeba</name>
    <dbReference type="NCBI Taxonomy" id="5757"/>
</organismHost>
<gene>
    <name type="ordered locus">MIMI_L675</name>
</gene>
<keyword id="KW-0040">ANK repeat</keyword>
<keyword id="KW-1185">Reference proteome</keyword>
<keyword id="KW-0677">Repeat</keyword>
<name>YL675_MIMIV</name>
<accession>Q5UNU1</accession>
<sequence>MELKTMYFDTNNTMYLKVVSKKFVDKLNEGYNYLDDEYKIATLDITDDLFYKCSDDCVRECFNNDSSAHLRMRKTANELVSFTDYKNVFGQLRKDSVFVLQVFPKFDDPEFQMQEITDGNHGTIYKANRFYLGEKFDLGDVEVVKFFIKKGTDIHLHYDSIQRWAFDNRKTEVSMYLFGFSFVRGLDNFKVLAKICRDGNLELLRLLELNGFNETIKLYAIILSYISFQPLLTNYLLTKSYNFQKSNITVSNWKATMPYGTIDQYKTKVLLMAIANNHAELVQYLLTQNPSDKDINHAMLYAVTTANASLLDYTLKNGGNIHYKNDQALILAVRFNHISMVRKLICLGMDSNNVFALTMAAENNHQDIVQHLINRGADVNANNRSALIAAVKNGHLKIVQMFVNNGADIKIDDTVIKTACKNGHNNIVKYLLGKGVSCDDIVLPSNSSFFSIVKLAVKRSIIVNNDKSNKIK</sequence>
<organism>
    <name type="scientific">Acanthamoeba polyphaga mimivirus</name>
    <name type="common">APMV</name>
    <dbReference type="NCBI Taxonomy" id="212035"/>
    <lineage>
        <taxon>Viruses</taxon>
        <taxon>Varidnaviria</taxon>
        <taxon>Bamfordvirae</taxon>
        <taxon>Nucleocytoviricota</taxon>
        <taxon>Megaviricetes</taxon>
        <taxon>Imitervirales</taxon>
        <taxon>Mimiviridae</taxon>
        <taxon>Megamimivirinae</taxon>
        <taxon>Mimivirus</taxon>
        <taxon>Mimivirus bradfordmassiliense</taxon>
    </lineage>
</organism>
<dbReference type="EMBL" id="AY653733">
    <property type="protein sequence ID" value="AAV50936.1"/>
    <property type="molecule type" value="Genomic_DNA"/>
</dbReference>
<dbReference type="SMR" id="Q5UNU1"/>
<dbReference type="KEGG" id="vg:9925322"/>
<dbReference type="Proteomes" id="UP000001134">
    <property type="component" value="Genome"/>
</dbReference>
<dbReference type="Gene3D" id="1.25.40.20">
    <property type="entry name" value="Ankyrin repeat-containing domain"/>
    <property type="match status" value="1"/>
</dbReference>
<dbReference type="InterPro" id="IPR002110">
    <property type="entry name" value="Ankyrin_rpt"/>
</dbReference>
<dbReference type="InterPro" id="IPR036770">
    <property type="entry name" value="Ankyrin_rpt-contain_sf"/>
</dbReference>
<dbReference type="PANTHER" id="PTHR24188">
    <property type="entry name" value="ANKYRIN REPEAT PROTEIN"/>
    <property type="match status" value="1"/>
</dbReference>
<dbReference type="PANTHER" id="PTHR24188:SF29">
    <property type="entry name" value="GH09064P"/>
    <property type="match status" value="1"/>
</dbReference>
<dbReference type="Pfam" id="PF12796">
    <property type="entry name" value="Ank_2"/>
    <property type="match status" value="1"/>
</dbReference>
<dbReference type="SMART" id="SM00248">
    <property type="entry name" value="ANK"/>
    <property type="match status" value="6"/>
</dbReference>
<dbReference type="SUPFAM" id="SSF48403">
    <property type="entry name" value="Ankyrin repeat"/>
    <property type="match status" value="1"/>
</dbReference>
<dbReference type="PROSITE" id="PS50297">
    <property type="entry name" value="ANK_REP_REGION"/>
    <property type="match status" value="1"/>
</dbReference>
<dbReference type="PROSITE" id="PS50088">
    <property type="entry name" value="ANK_REPEAT"/>
    <property type="match status" value="2"/>
</dbReference>
<reference key="1">
    <citation type="journal article" date="2004" name="Science">
        <title>The 1.2-megabase genome sequence of Mimivirus.</title>
        <authorList>
            <person name="Raoult D."/>
            <person name="Audic S."/>
            <person name="Robert C."/>
            <person name="Abergel C."/>
            <person name="Renesto P."/>
            <person name="Ogata H."/>
            <person name="La Scola B."/>
            <person name="Susan M."/>
            <person name="Claverie J.-M."/>
        </authorList>
    </citation>
    <scope>NUCLEOTIDE SEQUENCE [LARGE SCALE GENOMIC DNA]</scope>
    <source>
        <strain>Rowbotham-Bradford</strain>
    </source>
</reference>